<accession>J2EKT7</accession>
<feature type="chain" id="PRO_0000458740" description="Metallothionein">
    <location>
        <begin position="1"/>
        <end position="82"/>
    </location>
</feature>
<feature type="region of interest" description="Disordered" evidence="1">
    <location>
        <begin position="61"/>
        <end position="82"/>
    </location>
</feature>
<feature type="binding site" evidence="2 7 9 11">
    <location>
        <position position="6"/>
    </location>
    <ligand>
        <name>Cd(2+)</name>
        <dbReference type="ChEBI" id="CHEBI:48775"/>
        <label>4</label>
    </ligand>
</feature>
<feature type="binding site" evidence="2 12">
    <location>
        <position position="6"/>
    </location>
    <ligand>
        <name>Zn(2+)</name>
        <dbReference type="ChEBI" id="CHEBI:29105"/>
        <label>3</label>
    </ligand>
</feature>
<feature type="binding site" evidence="2 7 9 11">
    <location>
        <position position="8"/>
    </location>
    <ligand>
        <name>Cd(2+)</name>
        <dbReference type="ChEBI" id="CHEBI:48775"/>
        <label>3</label>
    </ligand>
</feature>
<feature type="binding site" evidence="2 12">
    <location>
        <position position="8"/>
    </location>
    <ligand>
        <name>Zn(2+)</name>
        <dbReference type="ChEBI" id="CHEBI:29105"/>
        <label>2</label>
    </ligand>
</feature>
<feature type="binding site" evidence="2 7 9">
    <location>
        <position position="11"/>
    </location>
    <ligand>
        <name>Cd(2+)</name>
        <dbReference type="ChEBI" id="CHEBI:48775"/>
        <label>1</label>
    </ligand>
</feature>
<feature type="binding site" evidence="2 7 9 11">
    <location>
        <position position="11"/>
    </location>
    <ligand>
        <name>Cd(2+)</name>
        <dbReference type="ChEBI" id="CHEBI:48775"/>
        <label>2</label>
    </ligand>
</feature>
<feature type="binding site" evidence="2 7 9 11">
    <location>
        <position position="11"/>
    </location>
    <ligand>
        <name>Cd(2+)</name>
        <dbReference type="ChEBI" id="CHEBI:48775"/>
        <label>4</label>
    </ligand>
</feature>
<feature type="binding site" evidence="2 12">
    <location>
        <position position="11"/>
    </location>
    <ligand>
        <name>Zn(2+)</name>
        <dbReference type="ChEBI" id="CHEBI:29105"/>
        <label>1</label>
    </ligand>
</feature>
<feature type="binding site" evidence="2 12">
    <location>
        <position position="11"/>
    </location>
    <ligand>
        <name>Zn(2+)</name>
        <dbReference type="ChEBI" id="CHEBI:29105"/>
        <label>3</label>
    </ligand>
</feature>
<feature type="binding site" evidence="2 7 9 11">
    <location>
        <position position="13"/>
    </location>
    <ligand>
        <name>Cd(2+)</name>
        <dbReference type="ChEBI" id="CHEBI:48775"/>
        <label>1</label>
    </ligand>
</feature>
<feature type="binding site" evidence="2 7 9 11">
    <location>
        <position position="29"/>
    </location>
    <ligand>
        <name>Cd(2+)</name>
        <dbReference type="ChEBI" id="CHEBI:48775"/>
        <label>1</label>
    </ligand>
</feature>
<feature type="binding site" evidence="2 7 9 11">
    <location>
        <position position="29"/>
    </location>
    <ligand>
        <name>Cd(2+)</name>
        <dbReference type="ChEBI" id="CHEBI:48775"/>
        <label>4</label>
    </ligand>
</feature>
<feature type="binding site" evidence="2 12">
    <location>
        <position position="29"/>
    </location>
    <ligand>
        <name>Zn(2+)</name>
        <dbReference type="ChEBI" id="CHEBI:29105"/>
        <label>3</label>
    </ligand>
</feature>
<feature type="binding site" evidence="2 7 9 11">
    <location>
        <position position="33"/>
    </location>
    <ligand>
        <name>Cd(2+)</name>
        <dbReference type="ChEBI" id="CHEBI:48775"/>
        <label>3</label>
    </ligand>
</feature>
<feature type="binding site" evidence="2 7 9 11">
    <location>
        <position position="33"/>
    </location>
    <ligand>
        <name>Cd(2+)</name>
        <dbReference type="ChEBI" id="CHEBI:48775"/>
        <label>4</label>
    </ligand>
</feature>
<feature type="binding site" evidence="2 12">
    <location>
        <position position="33"/>
    </location>
    <ligand>
        <name>Zn(2+)</name>
        <dbReference type="ChEBI" id="CHEBI:29105"/>
        <label>2</label>
    </ligand>
</feature>
<feature type="binding site" evidence="2 12">
    <location>
        <position position="33"/>
    </location>
    <ligand>
        <name>Zn(2+)</name>
        <dbReference type="ChEBI" id="CHEBI:29105"/>
        <label>3</label>
    </ligand>
</feature>
<feature type="binding site" evidence="2 7 9 11">
    <location>
        <position position="37"/>
    </location>
    <ligand>
        <name>Cd(2+)</name>
        <dbReference type="ChEBI" id="CHEBI:48775"/>
        <label>3</label>
    </ligand>
</feature>
<feature type="binding site" evidence="2 12">
    <location>
        <position position="37"/>
    </location>
    <ligand>
        <name>Zn(2+)</name>
        <dbReference type="ChEBI" id="CHEBI:29105"/>
        <label>2</label>
    </ligand>
</feature>
<feature type="binding site" evidence="2 7 9 11">
    <location>
        <position position="43"/>
    </location>
    <ligand>
        <name>Cd(2+)</name>
        <dbReference type="ChEBI" id="CHEBI:48775"/>
        <label>1</label>
    </ligand>
</feature>
<feature type="binding site" evidence="2 7 9 11">
    <location>
        <position position="43"/>
    </location>
    <ligand>
        <name>Cd(2+)</name>
        <dbReference type="ChEBI" id="CHEBI:48775"/>
        <label>2</label>
    </ligand>
</feature>
<feature type="binding site" evidence="2 12">
    <location>
        <position position="43"/>
    </location>
    <ligand>
        <name>Zn(2+)</name>
        <dbReference type="ChEBI" id="CHEBI:29105"/>
        <label>1</label>
    </ligand>
</feature>
<feature type="binding site" evidence="2 7 9 11">
    <location>
        <position position="48"/>
    </location>
    <ligand>
        <name>Cd(2+)</name>
        <dbReference type="ChEBI" id="CHEBI:48775"/>
        <label>2</label>
    </ligand>
</feature>
<feature type="binding site" evidence="2 12">
    <location>
        <position position="48"/>
    </location>
    <ligand>
        <name>Zn(2+)</name>
        <dbReference type="ChEBI" id="CHEBI:29105"/>
        <label>1</label>
    </ligand>
</feature>
<feature type="binding site" evidence="2 7 9 11">
    <location>
        <position position="50"/>
    </location>
    <ligand>
        <name>Cd(2+)</name>
        <dbReference type="ChEBI" id="CHEBI:48775"/>
        <label>2</label>
    </ligand>
</feature>
<feature type="binding site" evidence="2 7 9 11">
    <location>
        <position position="50"/>
    </location>
    <ligand>
        <name>Cd(2+)</name>
        <dbReference type="ChEBI" id="CHEBI:48775"/>
        <label>3</label>
    </ligand>
</feature>
<feature type="binding site" evidence="2 12">
    <location>
        <position position="50"/>
    </location>
    <ligand>
        <name>Zn(2+)</name>
        <dbReference type="ChEBI" id="CHEBI:29105"/>
        <label>1</label>
    </ligand>
</feature>
<feature type="binding site" evidence="2 12">
    <location>
        <position position="50"/>
    </location>
    <ligand>
        <name>Zn(2+)</name>
        <dbReference type="ChEBI" id="CHEBI:29105"/>
        <label>2</label>
    </ligand>
</feature>
<feature type="mutagenesis site" description="No effect on metal ion binding capacity; when associated with 54-G--P-82 del." evidence="2">
    <original>H</original>
    <variation>N</variation>
    <location>
        <position position="12"/>
    </location>
</feature>
<feature type="mutagenesis site" description="No effect on metal ion binding capacity; when associated with 54-G--P-82 del." evidence="2">
    <original>H</original>
    <variation>N</variation>
    <location>
        <position position="23"/>
    </location>
</feature>
<feature type="mutagenesis site" description="Affinity for Zn(2+) increases resulting in the binding of a fourth Zn(2+); when associated with 54-G--P-82 del." evidence="2">
    <original>A</original>
    <variation>H</variation>
    <location>
        <position position="45"/>
    </location>
</feature>
<feature type="mutagenesis site" description="No effect on metal ion binding capacity; when associated with 54-G--P-82 del." evidence="2">
    <original>H</original>
    <variation>N</variation>
    <location>
        <position position="49"/>
    </location>
</feature>
<feature type="mutagenesis site" description="No effect on metal ion binding capacity. Affinity for Zn(2+) increases resulting in the binding of a fourth Zn(2+); when associated with H-45. No effect on metal ion binding capacity; when associated with N-12, N-22 or N-49." evidence="2">
    <location>
        <begin position="54"/>
        <end position="82"/>
    </location>
</feature>
<feature type="helix" evidence="14">
    <location>
        <begin position="17"/>
        <end position="19"/>
    </location>
</feature>
<feature type="strand" evidence="13">
    <location>
        <begin position="21"/>
        <end position="23"/>
    </location>
</feature>
<feature type="strand" evidence="13">
    <location>
        <begin position="26"/>
        <end position="30"/>
    </location>
</feature>
<feature type="helix" evidence="13">
    <location>
        <begin position="31"/>
        <end position="34"/>
    </location>
</feature>
<feature type="strand" evidence="13">
    <location>
        <begin position="38"/>
        <end position="40"/>
    </location>
</feature>
<feature type="turn" evidence="14">
    <location>
        <begin position="50"/>
        <end position="52"/>
    </location>
</feature>
<proteinExistence type="evidence at protein level"/>
<gene>
    <name evidence="4" type="primary">MT</name>
    <name evidence="6" type="ORF">PflQ2_2045</name>
</gene>
<evidence type="ECO:0000256" key="1">
    <source>
        <dbReference type="SAM" id="MobiDB-lite"/>
    </source>
</evidence>
<evidence type="ECO:0000269" key="2">
    <source>
    </source>
</evidence>
<evidence type="ECO:0000269" key="3">
    <source>
    </source>
</evidence>
<evidence type="ECO:0000303" key="4">
    <source>
    </source>
</evidence>
<evidence type="ECO:0000305" key="5"/>
<evidence type="ECO:0000312" key="6">
    <source>
        <dbReference type="EMBL" id="EJL04150.1"/>
    </source>
</evidence>
<evidence type="ECO:0000312" key="7">
    <source>
        <dbReference type="PDB" id="6GV6"/>
    </source>
</evidence>
<evidence type="ECO:0000312" key="8">
    <source>
        <dbReference type="Proteomes" id="UP000007289"/>
    </source>
</evidence>
<evidence type="ECO:0007744" key="9">
    <source>
        <dbReference type="PDB" id="6GRV"/>
    </source>
</evidence>
<evidence type="ECO:0007744" key="10">
    <source>
        <dbReference type="PDB" id="6GV6"/>
    </source>
</evidence>
<evidence type="ECO:0007744" key="11">
    <source>
        <dbReference type="PDB" id="6GV7"/>
    </source>
</evidence>
<evidence type="ECO:0007744" key="12">
    <source>
        <dbReference type="PDB" id="6GW8"/>
    </source>
</evidence>
<evidence type="ECO:0007829" key="13">
    <source>
        <dbReference type="PDB" id="6GRV"/>
    </source>
</evidence>
<evidence type="ECO:0007829" key="14">
    <source>
        <dbReference type="PDB" id="6GV6"/>
    </source>
</evidence>
<sequence length="82" mass="8944">MNELRCGCPDCHCKVDPERVFNHDGEAYCSQACAEQHPNGEPCPAPDCHCERSGKVGGRDITNNQLDEALEETFPASDPISP</sequence>
<name>MT_PSEFQ</name>
<dbReference type="EMBL" id="AGBM01000001">
    <property type="protein sequence ID" value="EJL04150.1"/>
    <property type="molecule type" value="Genomic_DNA"/>
</dbReference>
<dbReference type="RefSeq" id="WP_003180368.1">
    <property type="nucleotide sequence ID" value="NZ_CM001558.1"/>
</dbReference>
<dbReference type="PDB" id="6GRV">
    <property type="method" value="NMR"/>
    <property type="chains" value="A=2-82"/>
</dbReference>
<dbReference type="PDB" id="6GV6">
    <property type="method" value="NMR"/>
    <property type="chains" value="A=2-53"/>
</dbReference>
<dbReference type="PDB" id="6GV7">
    <property type="method" value="NMR"/>
    <property type="chains" value="A=2-53"/>
</dbReference>
<dbReference type="PDB" id="6GW8">
    <property type="method" value="NMR"/>
    <property type="chains" value="A=2-53"/>
</dbReference>
<dbReference type="PDBsum" id="6GRV"/>
<dbReference type="PDBsum" id="6GV6"/>
<dbReference type="PDBsum" id="6GV7"/>
<dbReference type="PDBsum" id="6GW8"/>
<dbReference type="BMRB" id="J2EKT7"/>
<dbReference type="SMR" id="J2EKT7"/>
<dbReference type="PATRIC" id="fig|1038922.3.peg.3493"/>
<dbReference type="HOGENOM" id="CLU_192999_0_0_6"/>
<dbReference type="Proteomes" id="UP000007289">
    <property type="component" value="Chromosome"/>
</dbReference>
<dbReference type="GO" id="GO:0046870">
    <property type="term" value="F:cadmium ion binding"/>
    <property type="evidence" value="ECO:0000314"/>
    <property type="project" value="UniProtKB"/>
</dbReference>
<dbReference type="GO" id="GO:0008270">
    <property type="term" value="F:zinc ion binding"/>
    <property type="evidence" value="ECO:0000314"/>
    <property type="project" value="UniProtKB"/>
</dbReference>
<dbReference type="Gene3D" id="2.30.170.10">
    <property type="match status" value="1"/>
</dbReference>
<dbReference type="InterPro" id="IPR017854">
    <property type="entry name" value="Metalthion_dom_sf"/>
</dbReference>
<dbReference type="InterPro" id="IPR000518">
    <property type="entry name" value="Metalthion_fam14_prok"/>
</dbReference>
<dbReference type="Pfam" id="PF02069">
    <property type="entry name" value="Metallothio_Pro"/>
    <property type="match status" value="1"/>
</dbReference>
<dbReference type="SUPFAM" id="SSF57868">
    <property type="entry name" value="Metallothionein"/>
    <property type="match status" value="1"/>
</dbReference>
<keyword id="KW-0002">3D-structure</keyword>
<keyword id="KW-0104">Cadmium</keyword>
<keyword id="KW-0479">Metal-binding</keyword>
<keyword id="KW-0480">Metal-thiolate cluster</keyword>
<keyword id="KW-0862">Zinc</keyword>
<protein>
    <recommendedName>
        <fullName evidence="4">Metallothionein</fullName>
    </recommendedName>
    <alternativeName>
        <fullName evidence="4">PflQ2 MT</fullName>
    </alternativeName>
</protein>
<organism>
    <name type="scientific">Pseudomonas fluorescens (strain Q2-87)</name>
    <dbReference type="NCBI Taxonomy" id="1038922"/>
    <lineage>
        <taxon>Bacteria</taxon>
        <taxon>Pseudomonadati</taxon>
        <taxon>Pseudomonadota</taxon>
        <taxon>Gammaproteobacteria</taxon>
        <taxon>Pseudomonadales</taxon>
        <taxon>Pseudomonadaceae</taxon>
        <taxon>Pseudomonas</taxon>
    </lineage>
</organism>
<comment type="function">
    <text evidence="2 3">Metallothioneins are small proteins that have a high content of cysteine residues which allow them to bind heavy metal ions through clusters of thiolate bonds (PubMed:30191219). Preferentially, binds four Cd(2+) ions (PubMed:30191219). Also binds three Zn(2+) ions but with less affinity (PubMed:30191219). Required for long-term viability (PubMed:32793167). May play a role in the storage or sequestration of metals when present in excess (PubMed:32793167).</text>
</comment>
<comment type="induction">
    <text evidence="2">Up-regulated during the stationary phase.</text>
</comment>
<comment type="disruption phenotype">
    <text evidence="3">No effect on cell growth in the presence of excess Zn(2+)/Cd(2+) or in metal-limited conditions (PubMed:32793167). Reduced long term survival (PubMed:32793167).</text>
</comment>
<comment type="similarity">
    <text evidence="5">Belongs to the metallothionein superfamily.</text>
</comment>
<reference evidence="8" key="1">
    <citation type="journal article" date="2012" name="PLoS Genet.">
        <title>Comparative Genomics of Plant-Associated Pseudomonas spp.: Insights into Diversity and Inheritance of Traits Involved in Multitrophic Interactions.</title>
        <authorList>
            <person name="Loper J.E."/>
            <person name="Hassan K.A."/>
            <person name="Mavrodi D.V."/>
            <person name="Davis E.W. II"/>
            <person name="Lim C.K."/>
            <person name="Shaffer B.T."/>
            <person name="Elbourne L.D."/>
            <person name="Stockwell V.O."/>
            <person name="Hartney S.L."/>
            <person name="Breakwell K."/>
            <person name="Henkels M.D."/>
            <person name="Tetu S.G."/>
            <person name="Rangel L.I."/>
            <person name="Kidarsa T.A."/>
            <person name="Wilson N.L."/>
            <person name="van de Mortel J.E."/>
            <person name="Song C."/>
            <person name="Blumhagen R."/>
            <person name="Radune D."/>
            <person name="Hostetler J.B."/>
            <person name="Brinkac L.M."/>
            <person name="Durkin A.S."/>
            <person name="Kluepfel D.A."/>
            <person name="Wechter W.P."/>
            <person name="Anderson A.J."/>
            <person name="Kim Y.C."/>
            <person name="Pierson L.S. III"/>
            <person name="Pierson E.A."/>
            <person name="Lindow S.E."/>
            <person name="Kobayashi D.Y."/>
            <person name="Raaijmakers J.M."/>
            <person name="Weller D.M."/>
            <person name="Thomashow L.S."/>
            <person name="Allen A.E."/>
            <person name="Paulsen I.T."/>
        </authorList>
    </citation>
    <scope>NUCLEOTIDE SEQUENCE [LARGE SCALE GENOMIC DNA]</scope>
    <source>
        <strain evidence="6">Q2-87</strain>
    </source>
</reference>
<reference evidence="5" key="2">
    <citation type="journal article" date="2020" name="Front. Microbiol.">
        <title>Deciphering the Enigmatic Function of Pseudomonas Metallothioneins.</title>
        <authorList>
            <person name="Habjanic J."/>
            <person name="Mathew A."/>
            <person name="Eberl L."/>
            <person name="Freisinger E."/>
        </authorList>
    </citation>
    <scope>FUNCTION</scope>
    <scope>INDUCTION</scope>
    <scope>DISRUPTION PHENOTYPE</scope>
</reference>
<reference evidence="9 10 11 12" key="3">
    <citation type="journal article" date="2018" name="Metallomics">
        <title>A histidine-rich Pseudomonas metallothionein with a disordered tail displays higher binding capacity for cadmium than zinc.</title>
        <authorList>
            <person name="Habjanic J."/>
            <person name="Zerbe O."/>
            <person name="Freisinger E."/>
        </authorList>
    </citation>
    <scope>STRUCTURE BY NMR OF 2-82 OF WILD TYPE AND MUTANT HIS-45 IN COMPLEX WITH ZN(2+) AND CD(2+)</scope>
    <scope>FUNCTION</scope>
    <scope>MUTAGENESIS OF HIS-12; HIS-23; ALA-45; HIS-49 AND 54-GLY--PRO-82</scope>
</reference>